<keyword id="KW-0002">3D-structure</keyword>
<keyword id="KW-0106">Calcium</keyword>
<keyword id="KW-0119">Carbohydrate metabolism</keyword>
<keyword id="KW-0903">Direct protein sequencing</keyword>
<keyword id="KW-0456">Lyase</keyword>
<keyword id="KW-0479">Metal-binding</keyword>
<keyword id="KW-0574">Periplasm</keyword>
<keyword id="KW-0732">Signal</keyword>
<keyword id="KW-0915">Sodium</keyword>
<name>CABC1_PROVU</name>
<protein>
    <recommendedName>
        <fullName>Chondroitin sulfate ABC endolyase</fullName>
        <ecNumber>4.2.2.20</ecNumber>
    </recommendedName>
    <alternativeName>
        <fullName>Chondroitin ABC endoeliminase</fullName>
    </alternativeName>
    <alternativeName>
        <fullName>Chondroitin ABC lyase I</fullName>
    </alternativeName>
    <alternativeName>
        <fullName>Chondroitin sulfate ABC lyase I</fullName>
        <shortName>ChS ABC lyase I</shortName>
    </alternativeName>
    <alternativeName>
        <fullName>Chondroitinase ABC I</fullName>
        <shortName>cABC I</shortName>
    </alternativeName>
    <alternativeName>
        <fullName>Endochondroitinase ABC</fullName>
    </alternativeName>
    <innName>Condoliase</innName>
</protein>
<feature type="signal peptide" evidence="6">
    <location>
        <begin position="1"/>
        <end position="24"/>
    </location>
</feature>
<feature type="chain" id="PRO_0000024929" description="Chondroitin sulfate ABC endolyase">
    <location>
        <begin position="25"/>
        <end position="1021"/>
    </location>
</feature>
<feature type="active site" description="Proton acceptor" evidence="3 4">
    <location>
        <position position="501"/>
    </location>
</feature>
<feature type="active site" description="Proton donor" evidence="1">
    <location>
        <position position="508"/>
    </location>
</feature>
<feature type="binding site" evidence="2 10">
    <location>
        <position position="43"/>
    </location>
    <ligand>
        <name>Na(+)</name>
        <dbReference type="ChEBI" id="CHEBI:29101"/>
    </ligand>
</feature>
<feature type="binding site" evidence="2 10">
    <location>
        <position position="70"/>
    </location>
    <ligand>
        <name>Na(+)</name>
        <dbReference type="ChEBI" id="CHEBI:29101"/>
    </ligand>
</feature>
<feature type="binding site" evidence="2 10">
    <location>
        <position position="73"/>
    </location>
    <ligand>
        <name>Na(+)</name>
        <dbReference type="ChEBI" id="CHEBI:29101"/>
    </ligand>
</feature>
<feature type="binding site" evidence="2 10">
    <location>
        <position position="211"/>
    </location>
    <ligand>
        <name>Na(+)</name>
        <dbReference type="ChEBI" id="CHEBI:29101"/>
    </ligand>
</feature>
<feature type="site" description="Transition state stabilizer" evidence="1">
    <location>
        <position position="560"/>
    </location>
</feature>
<feature type="site" description="Important for catalytic activity">
    <location>
        <position position="653"/>
    </location>
</feature>
<feature type="mutagenesis site" description="Still active on both chondroitin 6-sulfate and dermatan sulfate, but with highly reduced catalytic efficiency." evidence="3 4">
    <original>R</original>
    <variation>A</variation>
    <location>
        <position position="500"/>
    </location>
</feature>
<feature type="mutagenesis site" description="Loss of activity on both chondroitin 6-sulfate and dermatan sulfate." evidence="3 4">
    <original>H</original>
    <variation>A</variation>
    <variation>K</variation>
    <variation>R</variation>
    <location>
        <position position="501"/>
    </location>
</feature>
<feature type="mutagenesis site" description="Loss of activity on both chondroitin 6-sulfate and dermatan sulfate." evidence="3 4">
    <original>Y</original>
    <variation>A</variation>
    <location>
        <position position="508"/>
    </location>
</feature>
<feature type="mutagenesis site" description="Still active on both chondroitin 6-sulfate and dermatan sulfate, but with greatly reduced catalytic efficiency." evidence="3 4">
    <original>Y</original>
    <variation>F</variation>
    <location>
        <position position="508"/>
    </location>
</feature>
<feature type="mutagenesis site" description="Loss of activity on both chondroitin 6-sulfate and dermatan sulfate." evidence="3 4">
    <original>R</original>
    <variation>A</variation>
    <location>
        <position position="560"/>
    </location>
</feature>
<feature type="mutagenesis site" description="Still active on both chondroitin 6-sulfate and dermatan sulfate, but with reduced catalytic efficiency." evidence="3">
    <original>H</original>
    <variation>A</variation>
    <location>
        <position position="561"/>
    </location>
</feature>
<feature type="mutagenesis site" description="Loss of activity on both chondroitin 6-sulfate and dermatan sulfate." evidence="3 4">
    <original>E</original>
    <variation>A</variation>
    <variation>D</variation>
    <location>
        <position position="653"/>
    </location>
</feature>
<feature type="mutagenesis site" description="Still active on both chondroitin 6-sulfate and dermatan sulfate, but with reduced catalytic efficiency." evidence="3 4">
    <original>E</original>
    <variation>Q</variation>
    <location>
        <position position="653"/>
    </location>
</feature>
<feature type="mutagenesis site" description="Still active on both chondroitin 6-sulfate and dermatan sulfate, but with reduced catalytic efficiency." evidence="3">
    <original>H</original>
    <variation>A</variation>
    <location>
        <position position="712"/>
    </location>
</feature>
<feature type="sequence conflict" description="In Ref. 1; no nucleotide entry." evidence="8" ref="1">
    <original>L</original>
    <variation>P</variation>
    <location>
        <position position="125"/>
    </location>
</feature>
<feature type="sequence conflict" description="In Ref. 1; no nucleotide entry." evidence="8" ref="1">
    <original>M</original>
    <variation>V</variation>
    <location>
        <position position="369"/>
    </location>
</feature>
<feature type="sequence conflict" description="In Ref. 1; no nucleotide entry." evidence="8" ref="1">
    <original>A</original>
    <variation>G</variation>
    <location>
        <position position="670"/>
    </location>
</feature>
<feature type="sequence conflict" description="In Ref. 1; no nucleotide entry." evidence="8" ref="1">
    <original>S</original>
    <variation>R</variation>
    <location>
        <position position="865"/>
    </location>
</feature>
<feature type="helix" evidence="13">
    <location>
        <begin position="33"/>
        <end position="35"/>
    </location>
</feature>
<feature type="strand" evidence="13">
    <location>
        <begin position="40"/>
        <end position="42"/>
    </location>
</feature>
<feature type="strand" evidence="13">
    <location>
        <begin position="46"/>
        <end position="50"/>
    </location>
</feature>
<feature type="strand" evidence="13">
    <location>
        <begin position="53"/>
        <end position="55"/>
    </location>
</feature>
<feature type="strand" evidence="13">
    <location>
        <begin position="59"/>
        <end position="66"/>
    </location>
</feature>
<feature type="strand" evidence="13">
    <location>
        <begin position="69"/>
        <end position="72"/>
    </location>
</feature>
<feature type="strand" evidence="13">
    <location>
        <begin position="74"/>
        <end position="80"/>
    </location>
</feature>
<feature type="strand" evidence="13">
    <location>
        <begin position="84"/>
        <end position="88"/>
    </location>
</feature>
<feature type="helix" evidence="13">
    <location>
        <begin position="96"/>
        <end position="103"/>
    </location>
</feature>
<feature type="strand" evidence="13">
    <location>
        <begin position="104"/>
        <end position="119"/>
    </location>
</feature>
<feature type="strand" evidence="13">
    <location>
        <begin position="122"/>
        <end position="132"/>
    </location>
</feature>
<feature type="strand" evidence="13">
    <location>
        <begin position="141"/>
        <end position="146"/>
    </location>
</feature>
<feature type="strand" evidence="13">
    <location>
        <begin position="151"/>
        <end position="158"/>
    </location>
</feature>
<feature type="turn" evidence="13">
    <location>
        <begin position="159"/>
        <end position="161"/>
    </location>
</feature>
<feature type="strand" evidence="13">
    <location>
        <begin position="194"/>
        <end position="198"/>
    </location>
</feature>
<feature type="strand" evidence="13">
    <location>
        <begin position="203"/>
        <end position="219"/>
    </location>
</feature>
<feature type="helix" evidence="13">
    <location>
        <begin position="251"/>
        <end position="269"/>
    </location>
</feature>
<feature type="helix" evidence="13">
    <location>
        <begin position="283"/>
        <end position="291"/>
    </location>
</feature>
<feature type="strand" evidence="14">
    <location>
        <begin position="303"/>
        <end position="305"/>
    </location>
</feature>
<feature type="helix" evidence="13">
    <location>
        <begin position="313"/>
        <end position="317"/>
    </location>
</feature>
<feature type="helix" evidence="13">
    <location>
        <begin position="319"/>
        <end position="321"/>
    </location>
</feature>
<feature type="helix" evidence="13">
    <location>
        <begin position="324"/>
        <end position="330"/>
    </location>
</feature>
<feature type="strand" evidence="13">
    <location>
        <begin position="333"/>
        <end position="335"/>
    </location>
</feature>
<feature type="helix" evidence="13">
    <location>
        <begin position="336"/>
        <end position="352"/>
    </location>
</feature>
<feature type="helix" evidence="13">
    <location>
        <begin position="356"/>
        <end position="375"/>
    </location>
</feature>
<feature type="helix" evidence="13">
    <location>
        <begin position="390"/>
        <end position="403"/>
    </location>
</feature>
<feature type="helix" evidence="13">
    <location>
        <begin position="405"/>
        <end position="410"/>
    </location>
</feature>
<feature type="helix" evidence="13">
    <location>
        <begin position="414"/>
        <end position="424"/>
    </location>
</feature>
<feature type="helix" evidence="13">
    <location>
        <begin position="425"/>
        <end position="428"/>
    </location>
</feature>
<feature type="helix" evidence="13">
    <location>
        <begin position="429"/>
        <end position="432"/>
    </location>
</feature>
<feature type="turn" evidence="13">
    <location>
        <begin position="438"/>
        <end position="441"/>
    </location>
</feature>
<feature type="helix" evidence="13">
    <location>
        <begin position="443"/>
        <end position="448"/>
    </location>
</feature>
<feature type="helix" evidence="13">
    <location>
        <begin position="450"/>
        <end position="458"/>
    </location>
</feature>
<feature type="helix" evidence="13">
    <location>
        <begin position="463"/>
        <end position="482"/>
    </location>
</feature>
<feature type="strand" evidence="13">
    <location>
        <begin position="490"/>
        <end position="492"/>
    </location>
</feature>
<feature type="strand" evidence="13">
    <location>
        <begin position="498"/>
        <end position="500"/>
    </location>
</feature>
<feature type="helix" evidence="13">
    <location>
        <begin position="506"/>
        <end position="523"/>
    </location>
</feature>
<feature type="helix" evidence="13">
    <location>
        <begin position="532"/>
        <end position="547"/>
    </location>
</feature>
<feature type="strand" evidence="13">
    <location>
        <begin position="549"/>
        <end position="553"/>
    </location>
</feature>
<feature type="helix" evidence="13">
    <location>
        <begin position="555"/>
        <end position="557"/>
    </location>
</feature>
<feature type="helix" evidence="13">
    <location>
        <begin position="568"/>
        <end position="571"/>
    </location>
</feature>
<feature type="helix" evidence="13">
    <location>
        <begin position="572"/>
        <end position="580"/>
    </location>
</feature>
<feature type="helix" evidence="13">
    <location>
        <begin position="588"/>
        <end position="598"/>
    </location>
</feature>
<feature type="helix" evidence="13">
    <location>
        <begin position="602"/>
        <end position="609"/>
    </location>
</feature>
<feature type="strand" evidence="13">
    <location>
        <begin position="621"/>
        <end position="625"/>
    </location>
</feature>
<feature type="helix" evidence="13">
    <location>
        <begin position="626"/>
        <end position="628"/>
    </location>
</feature>
<feature type="strand" evidence="13">
    <location>
        <begin position="630"/>
        <end position="635"/>
    </location>
</feature>
<feature type="strand" evidence="13">
    <location>
        <begin position="638"/>
        <end position="643"/>
    </location>
</feature>
<feature type="strand" evidence="15">
    <location>
        <begin position="649"/>
        <end position="651"/>
    </location>
</feature>
<feature type="helix" evidence="13">
    <location>
        <begin position="662"/>
        <end position="664"/>
    </location>
</feature>
<feature type="strand" evidence="13">
    <location>
        <begin position="667"/>
        <end position="676"/>
    </location>
</feature>
<feature type="helix" evidence="13">
    <location>
        <begin position="679"/>
        <end position="681"/>
    </location>
</feature>
<feature type="strand" evidence="13">
    <location>
        <begin position="697"/>
        <end position="699"/>
    </location>
</feature>
<feature type="helix" evidence="13">
    <location>
        <begin position="703"/>
        <end position="706"/>
    </location>
</feature>
<feature type="strand" evidence="13">
    <location>
        <begin position="709"/>
        <end position="712"/>
    </location>
</feature>
<feature type="strand" evidence="13">
    <location>
        <begin position="719"/>
        <end position="721"/>
    </location>
</feature>
<feature type="strand" evidence="13">
    <location>
        <begin position="724"/>
        <end position="728"/>
    </location>
</feature>
<feature type="turn" evidence="13">
    <location>
        <begin position="729"/>
        <end position="731"/>
    </location>
</feature>
<feature type="strand" evidence="13">
    <location>
        <begin position="732"/>
        <end position="740"/>
    </location>
</feature>
<feature type="strand" evidence="13">
    <location>
        <begin position="753"/>
        <end position="761"/>
    </location>
</feature>
<feature type="strand" evidence="13">
    <location>
        <begin position="764"/>
        <end position="773"/>
    </location>
</feature>
<feature type="turn" evidence="13">
    <location>
        <begin position="775"/>
        <end position="780"/>
    </location>
</feature>
<feature type="strand" evidence="13">
    <location>
        <begin position="781"/>
        <end position="789"/>
    </location>
</feature>
<feature type="strand" evidence="12">
    <location>
        <begin position="792"/>
        <end position="794"/>
    </location>
</feature>
<feature type="strand" evidence="13">
    <location>
        <begin position="797"/>
        <end position="799"/>
    </location>
</feature>
<feature type="strand" evidence="13">
    <location>
        <begin position="802"/>
        <end position="804"/>
    </location>
</feature>
<feature type="strand" evidence="13">
    <location>
        <begin position="807"/>
        <end position="813"/>
    </location>
</feature>
<feature type="strand" evidence="13">
    <location>
        <begin position="818"/>
        <end position="820"/>
    </location>
</feature>
<feature type="strand" evidence="13">
    <location>
        <begin position="826"/>
        <end position="831"/>
    </location>
</feature>
<feature type="strand" evidence="13">
    <location>
        <begin position="835"/>
        <end position="845"/>
    </location>
</feature>
<feature type="turn" evidence="13">
    <location>
        <begin position="847"/>
        <end position="849"/>
    </location>
</feature>
<feature type="strand" evidence="13">
    <location>
        <begin position="852"/>
        <end position="863"/>
    </location>
</feature>
<feature type="helix" evidence="13">
    <location>
        <begin position="864"/>
        <end position="866"/>
    </location>
</feature>
<feature type="strand" evidence="13">
    <location>
        <begin position="867"/>
        <end position="878"/>
    </location>
</feature>
<feature type="helix" evidence="13">
    <location>
        <begin position="883"/>
        <end position="894"/>
    </location>
</feature>
<feature type="strand" evidence="13">
    <location>
        <begin position="898"/>
        <end position="914"/>
    </location>
</feature>
<feature type="turn" evidence="13">
    <location>
        <begin position="915"/>
        <end position="918"/>
    </location>
</feature>
<feature type="strand" evidence="13">
    <location>
        <begin position="919"/>
        <end position="926"/>
    </location>
</feature>
<feature type="strand" evidence="13">
    <location>
        <begin position="933"/>
        <end position="949"/>
    </location>
</feature>
<feature type="strand" evidence="13">
    <location>
        <begin position="952"/>
        <end position="958"/>
    </location>
</feature>
<feature type="strand" evidence="13">
    <location>
        <begin position="966"/>
        <end position="968"/>
    </location>
</feature>
<feature type="strand" evidence="13">
    <location>
        <begin position="973"/>
        <end position="981"/>
    </location>
</feature>
<feature type="strand" evidence="11">
    <location>
        <begin position="983"/>
        <end position="986"/>
    </location>
</feature>
<feature type="strand" evidence="13">
    <location>
        <begin position="993"/>
        <end position="997"/>
    </location>
</feature>
<feature type="strand" evidence="13">
    <location>
        <begin position="1000"/>
        <end position="1008"/>
    </location>
</feature>
<feature type="strand" evidence="13">
    <location>
        <begin position="1013"/>
        <end position="1019"/>
    </location>
</feature>
<evidence type="ECO:0000255" key="1"/>
<evidence type="ECO:0000269" key="2">
    <source>
    </source>
</evidence>
<evidence type="ECO:0000269" key="3">
    <source>
    </source>
</evidence>
<evidence type="ECO:0000269" key="4">
    <source>
    </source>
</evidence>
<evidence type="ECO:0000269" key="5">
    <source>
    </source>
</evidence>
<evidence type="ECO:0000269" key="6">
    <source>
    </source>
</evidence>
<evidence type="ECO:0000269" key="7">
    <source>
    </source>
</evidence>
<evidence type="ECO:0000305" key="8"/>
<evidence type="ECO:0000305" key="9">
    <source>
    </source>
</evidence>
<evidence type="ECO:0007744" key="10">
    <source>
        <dbReference type="PDB" id="1HN0"/>
    </source>
</evidence>
<evidence type="ECO:0007829" key="11">
    <source>
        <dbReference type="PDB" id="1HN0"/>
    </source>
</evidence>
<evidence type="ECO:0007829" key="12">
    <source>
        <dbReference type="PDB" id="7EIP"/>
    </source>
</evidence>
<evidence type="ECO:0007829" key="13">
    <source>
        <dbReference type="PDB" id="7EIQ"/>
    </source>
</evidence>
<evidence type="ECO:0007829" key="14">
    <source>
        <dbReference type="PDB" id="7EIR"/>
    </source>
</evidence>
<evidence type="ECO:0007829" key="15">
    <source>
        <dbReference type="PDB" id="7YKE"/>
    </source>
</evidence>
<comment type="function">
    <text evidence="3 5 7">Endolytic, broad-specificity glycosaminoglycan lyase, which degrades the polysaccharides chondroitin, chondroitin-4-sulfate, chondroitin-6-sulfate, dermatan sulfate and to a lesser extent hyaluronan, by beta-elimination of 1,4-hexosaminidic bond to unsaturated tetrasaccharides and disaccharides. Is not active against keratan sulfate, heparan sulfate, and heparin. Is able to promote functional recovery in the injured central nervous system (CNS), via its role in the disruption of the normal organization of the extracellular matrix (ECM).</text>
</comment>
<comment type="catalytic activity">
    <reaction evidence="3 4 6 7">
        <text>Endolytic cleavage of (1-&gt;4)-beta-galactosaminic bonds between N-acetylgalactosamine and either D-glucuronic acid or L-iduronic acid to produce a mixture of Delta(4)-unsaturated oligosaccharides of different sizes that are ultimately degraded to Delta(4)-unsaturated tetra- and disaccharides.</text>
        <dbReference type="EC" id="4.2.2.20"/>
    </reaction>
</comment>
<comment type="activity regulation">
    <text evidence="7">Is inhibited by Zn(2+), Ni(2+), Fe(2+) and Cu(2+).</text>
</comment>
<comment type="biophysicochemical properties">
    <kinetics>
        <KM evidence="3 7">66 uM for chondroitin 6-sulfate</KM>
        <KM evidence="3 7">1.2 uM for chondroitin 6-sulfate</KM>
        <KM evidence="3 7">1.5 uM for chondroitin 4-sulfate</KM>
        <KM evidence="3 7">2.5 uM for dermatan sulfate</KM>
        <Vmax evidence="3 7">310.0 umol/min/mg enzyme with chondroitin 6-sulfate as substrate</Vmax>
    </kinetics>
    <phDependence>
        <text evidence="3 7">Optimum pH is 8. Is essentially inactive at pH 9.0.</text>
    </phDependence>
    <temperatureDependence>
        <text evidence="3 7">Optimum temperature is 37 degrees Celsius.</text>
    </temperatureDependence>
</comment>
<comment type="subunit">
    <text evidence="2">Monomer.</text>
</comment>
<comment type="subcellular location">
    <subcellularLocation>
        <location evidence="9">Periplasm</location>
    </subcellularLocation>
</comment>
<comment type="induction">
    <text evidence="6">By chondroitin sulfate or its degraded products.</text>
</comment>
<comment type="domain">
    <text evidence="2">Consists of three domains. The middle domain contains the catalytic site in a wide-open cleft.</text>
</comment>
<comment type="similarity">
    <text evidence="8">Belongs to the polysaccharide lyase 8 family.</text>
</comment>
<comment type="caution">
    <text evidence="8">PubMed:7512814 shows amino acid differences at positions 317, 321, 410, 694, 738 and 866 due to incorrect translation of the nucleotide sequence.</text>
</comment>
<comment type="sequence caution" evidence="8">
    <conflict type="frameshift" ref="1"/>
</comment>
<reference key="1">
    <citation type="journal article" date="1994" name="Appl. Microbiol. Biotechnol.">
        <title>Cloning and expression in Escherichia coli of the gene encoding the Proteus vulgaris chondroitin ABC lyase.</title>
        <authorList>
            <person name="Sato N."/>
            <person name="Shimada M."/>
            <person name="Nakajima H."/>
            <person name="Oda H."/>
            <person name="Kimura S."/>
        </authorList>
    </citation>
    <scope>NUCLEOTIDE SEQUENCE [GENOMIC DNA]</scope>
    <scope>PROTEIN SEQUENCE OF 25-42</scope>
    <scope>CATALYTIC ACTIVITY</scope>
    <scope>INDUCTION</scope>
    <source>
        <strain>ATCC 6896 / NBRC 3988 / NCIMB 8065 / NCTC 4636</strain>
    </source>
</reference>
<reference key="2">
    <citation type="patent" date="1994-11-10" number="WO9425567">
        <title>Cloning and expression of the chondroitinase I and II genes from Proteus vulgaris.</title>
        <authorList>
            <person name="Ryan M.J."/>
            <person name="Khandke K.M."/>
            <person name="Tilley B.C."/>
            <person name="Lotvin J.A."/>
        </authorList>
    </citation>
    <scope>NUCLEOTIDE SEQUENCE [GENOMIC DNA]</scope>
</reference>
<reference key="3">
    <citation type="submission" date="2009-09" db="EMBL/GenBank/DDBJ databases">
        <title>Use of chondroitin sulfate lyases in combination for promotion of neurite growth.</title>
        <authorList>
            <person name="Tam K.W."/>
            <person name="Wang Q."/>
            <person name="Li R.A."/>
            <person name="Chan Y.S."/>
            <person name="Shum D.K.Y."/>
        </authorList>
    </citation>
    <scope>NUCLEOTIDE SEQUENCE [GENOMIC DNA] OF 25-1021</scope>
    <source>
        <strain>ATCC 6896 / NBRC 3988 / NCIMB 8065 / NCTC 4636</strain>
    </source>
</reference>
<reference key="4">
    <citation type="journal article" date="1997" name="J. Biol. Chem.">
        <title>Two distinct chondroitin sulfate ABC lyases. An endoeliminase yielding tetrasaccharides and an exoeliminase preferentially acting on oligosaccharides.</title>
        <authorList>
            <person name="Hamai A."/>
            <person name="Hashimoto N."/>
            <person name="Mochizuki H."/>
            <person name="Kato F."/>
            <person name="Makiguchi Y."/>
            <person name="Horie K."/>
            <person name="Suzuki S."/>
        </authorList>
    </citation>
    <scope>FUNCTION</scope>
    <scope>CATALYTIC ACTIVITY</scope>
    <scope>SUBSTRATE SPECIFICITY</scope>
    <scope>ACTIVITY REGULATION</scope>
    <scope>BIOPHYSICOCHEMICAL PROPERTIES</scope>
    <source>
        <strain>ATCC 6896 / NBRC 3988 / NCIMB 8065 / NCTC 4636</strain>
    </source>
</reference>
<reference key="5">
    <citation type="journal article" date="2005" name="Biochem. J.">
        <title>Chondroitinase ABC I from Proteus vulgaris: cloning, recombinant expression and active site identification.</title>
        <authorList>
            <person name="Prabhakar V."/>
            <person name="Capila I."/>
            <person name="Bosques C.J."/>
            <person name="Pojasek K."/>
            <person name="Sasisekharan R."/>
        </authorList>
    </citation>
    <scope>FUNCTION</scope>
    <scope>CATALYTIC ACTIVITY</scope>
    <scope>SUBSTRATE SPECIFICITY</scope>
    <scope>BIOPHYSICOCHEMICAL PROPERTIES</scope>
    <scope>ACTIVE SITE RESIDUES</scope>
    <scope>SUBCELLULAR LOCATION</scope>
    <scope>MUTAGENESIS OF ARG-500; HIS-501; TYR-508; ARG-560; HIS-561; GLU-653 AND HIS-712</scope>
    <source>
        <strain>ATCC 6896 / NBRC 3988 / NCIMB 8065 / NCTC 4636</strain>
    </source>
</reference>
<reference key="6">
    <citation type="journal article" date="2005" name="Biochem. J.">
        <title>Biochemical characterization of the chondroitinase ABC I active site.</title>
        <authorList>
            <person name="Prabhakar V."/>
            <person name="Raman R."/>
            <person name="Capila I."/>
            <person name="Bosques C.J."/>
            <person name="Pojasek K."/>
            <person name="Sasisekharan R."/>
        </authorList>
    </citation>
    <scope>CATALYTIC ACTIVITY</scope>
    <scope>ACTIVE SITE RESIDUES</scope>
    <scope>MUTAGENESIS OF ARG-500; HIS-501; TYR-508; ARG-560 AND GLU-653</scope>
    <source>
        <strain>ATCC 6896 / NBRC 3988 / NCIMB 8065 / NCTC 4636</strain>
    </source>
</reference>
<reference key="7">
    <citation type="journal article" date="2007" name="Exp. Neurol.">
        <title>How does chondroitinase promote functional recovery in the damaged CNS?</title>
        <authorList>
            <person name="Crespo D."/>
            <person name="Asher R.A."/>
            <person name="Lin R."/>
            <person name="Rhodes K.E."/>
            <person name="Fawcett J.W."/>
        </authorList>
    </citation>
    <scope>ROLE IN DAMAGED CNS RECOVERY</scope>
</reference>
<reference key="8">
    <citation type="journal article" date="2003" name="J. Mol. Biol.">
        <title>Crystal structure of Proteus vulgaris chondroitin sulfate ABC lyase I at 1.9A resolution.</title>
        <authorList>
            <person name="Huang W."/>
            <person name="Lunin V.V."/>
            <person name="Li Y."/>
            <person name="Suzuki S."/>
            <person name="Sugiura N."/>
            <person name="Miyazono H."/>
            <person name="Cygler M."/>
        </authorList>
    </citation>
    <scope>X-RAY CRYSTALLOGRAPHY (1.9 ANGSTROMS) IN COMPLEX WITH SODIUM ION</scope>
    <scope>DOMAIN</scope>
    <scope>DISCUSSION OF SEQUENCE</scope>
    <source>
        <strain>ATCC 6896 / NBRC 3988 / NCIMB 8065 / NCTC 4636</strain>
    </source>
</reference>
<accession>P59807</accession>
<accession>D0V0C9</accession>
<dbReference type="EC" id="4.2.2.20"/>
<dbReference type="EMBL" id="GQ996964">
    <property type="protein sequence ID" value="ACY01450.1"/>
    <property type="molecule type" value="Genomic_DNA"/>
</dbReference>
<dbReference type="PDB" id="1HN0">
    <property type="method" value="X-ray"/>
    <property type="resolution" value="1.90 A"/>
    <property type="chains" value="A=1-1021"/>
</dbReference>
<dbReference type="PDB" id="7EIP">
    <property type="method" value="X-ray"/>
    <property type="resolution" value="1.88 A"/>
    <property type="chains" value="A=1-1021"/>
</dbReference>
<dbReference type="PDB" id="7EIQ">
    <property type="method" value="X-ray"/>
    <property type="resolution" value="1.80 A"/>
    <property type="chains" value="A=1-1021"/>
</dbReference>
<dbReference type="PDB" id="7EIR">
    <property type="method" value="X-ray"/>
    <property type="resolution" value="1.92 A"/>
    <property type="chains" value="A=1-1021"/>
</dbReference>
<dbReference type="PDB" id="7EIS">
    <property type="method" value="X-ray"/>
    <property type="resolution" value="2.50 A"/>
    <property type="chains" value="A=1-1021"/>
</dbReference>
<dbReference type="PDB" id="7YKE">
    <property type="method" value="X-ray"/>
    <property type="resolution" value="1.88 A"/>
    <property type="chains" value="A=1-1021"/>
</dbReference>
<dbReference type="PDBsum" id="1HN0"/>
<dbReference type="PDBsum" id="7EIP"/>
<dbReference type="PDBsum" id="7EIQ"/>
<dbReference type="PDBsum" id="7EIR"/>
<dbReference type="PDBsum" id="7EIS"/>
<dbReference type="PDBsum" id="7YKE"/>
<dbReference type="SMR" id="P59807"/>
<dbReference type="IntAct" id="P59807">
    <property type="interactions" value="2"/>
</dbReference>
<dbReference type="MINT" id="P59807"/>
<dbReference type="STRING" id="585.DR95_2846"/>
<dbReference type="CAZy" id="PL8">
    <property type="family name" value="Polysaccharide Lyase Family 8"/>
</dbReference>
<dbReference type="eggNOG" id="ENOG502Z8J1">
    <property type="taxonomic scope" value="Bacteria"/>
</dbReference>
<dbReference type="BioCyc" id="MetaCyc:MONOMER-15788"/>
<dbReference type="BRENDA" id="4.2.2.20">
    <property type="organism ID" value="5049"/>
</dbReference>
<dbReference type="EvolutionaryTrace" id="P59807"/>
<dbReference type="GO" id="GO:0005576">
    <property type="term" value="C:extracellular region"/>
    <property type="evidence" value="ECO:0007669"/>
    <property type="project" value="InterPro"/>
</dbReference>
<dbReference type="GO" id="GO:0042597">
    <property type="term" value="C:periplasmic space"/>
    <property type="evidence" value="ECO:0007669"/>
    <property type="project" value="UniProtKB-SubCell"/>
</dbReference>
<dbReference type="GO" id="GO:0030246">
    <property type="term" value="F:carbohydrate binding"/>
    <property type="evidence" value="ECO:0007669"/>
    <property type="project" value="InterPro"/>
</dbReference>
<dbReference type="GO" id="GO:0034000">
    <property type="term" value="F:chondroitin-sulfate-ABC endolyase activity"/>
    <property type="evidence" value="ECO:0007669"/>
    <property type="project" value="UniProtKB-EC"/>
</dbReference>
<dbReference type="GO" id="GO:0046872">
    <property type="term" value="F:metal ion binding"/>
    <property type="evidence" value="ECO:0007669"/>
    <property type="project" value="UniProtKB-KW"/>
</dbReference>
<dbReference type="GO" id="GO:0005975">
    <property type="term" value="P:carbohydrate metabolic process"/>
    <property type="evidence" value="ECO:0007669"/>
    <property type="project" value="InterPro"/>
</dbReference>
<dbReference type="GO" id="GO:0006027">
    <property type="term" value="P:glycosaminoglycan catabolic process"/>
    <property type="evidence" value="ECO:0007669"/>
    <property type="project" value="InterPro"/>
</dbReference>
<dbReference type="CDD" id="cd01083">
    <property type="entry name" value="GAG_Lyase"/>
    <property type="match status" value="1"/>
</dbReference>
<dbReference type="Gene3D" id="2.70.98.10">
    <property type="match status" value="1"/>
</dbReference>
<dbReference type="Gene3D" id="1.50.10.100">
    <property type="entry name" value="Chondroitin AC/alginate lyase"/>
    <property type="match status" value="1"/>
</dbReference>
<dbReference type="Gene3D" id="2.60.120.430">
    <property type="entry name" value="Galactose-binding lectin"/>
    <property type="match status" value="1"/>
</dbReference>
<dbReference type="Gene3D" id="2.60.220.10">
    <property type="entry name" value="Polysaccharide lyase family 8-like, C-terminal"/>
    <property type="match status" value="1"/>
</dbReference>
<dbReference type="InterPro" id="IPR039174">
    <property type="entry name" value="Chondroitin_ABC_lyase"/>
</dbReference>
<dbReference type="InterPro" id="IPR008929">
    <property type="entry name" value="Chondroitin_lyas"/>
</dbReference>
<dbReference type="InterPro" id="IPR024200">
    <property type="entry name" value="Chondroitinase_ABC_I"/>
</dbReference>
<dbReference type="InterPro" id="IPR011013">
    <property type="entry name" value="Gal_mutarotase_sf_dom"/>
</dbReference>
<dbReference type="InterPro" id="IPR008979">
    <property type="entry name" value="Galactose-bd-like_sf"/>
</dbReference>
<dbReference type="InterPro" id="IPR014718">
    <property type="entry name" value="GH-type_carb-bd"/>
</dbReference>
<dbReference type="InterPro" id="IPR011071">
    <property type="entry name" value="Lyase_8-like_C"/>
</dbReference>
<dbReference type="InterPro" id="IPR004103">
    <property type="entry name" value="Lyase_8_C"/>
</dbReference>
<dbReference type="InterPro" id="IPR003159">
    <property type="entry name" value="Lyase_8_central_dom"/>
</dbReference>
<dbReference type="InterPro" id="IPR015177">
    <property type="entry name" value="Lyase_catalyt"/>
</dbReference>
<dbReference type="InterPro" id="IPR015176">
    <property type="entry name" value="Lyase_N"/>
</dbReference>
<dbReference type="PANTHER" id="PTHR37322">
    <property type="match status" value="1"/>
</dbReference>
<dbReference type="PANTHER" id="PTHR37322:SF3">
    <property type="entry name" value="CHONDROITIN SULFATE ABC EXOLYASE"/>
    <property type="match status" value="1"/>
</dbReference>
<dbReference type="Pfam" id="PF02278">
    <property type="entry name" value="Lyase_8"/>
    <property type="match status" value="1"/>
</dbReference>
<dbReference type="Pfam" id="PF02884">
    <property type="entry name" value="Lyase_8_C"/>
    <property type="match status" value="1"/>
</dbReference>
<dbReference type="Pfam" id="PF09093">
    <property type="entry name" value="Lyase_catalyt"/>
    <property type="match status" value="1"/>
</dbReference>
<dbReference type="Pfam" id="PF09092">
    <property type="entry name" value="Lyase_N"/>
    <property type="match status" value="1"/>
</dbReference>
<dbReference type="PIRSF" id="PIRSF034515">
    <property type="entry name" value="Chondroitinase"/>
    <property type="match status" value="1"/>
</dbReference>
<dbReference type="SUPFAM" id="SSF48230">
    <property type="entry name" value="Chondroitin AC/alginate lyase"/>
    <property type="match status" value="1"/>
</dbReference>
<dbReference type="SUPFAM" id="SSF74650">
    <property type="entry name" value="Galactose mutarotase-like"/>
    <property type="match status" value="1"/>
</dbReference>
<dbReference type="SUPFAM" id="SSF49785">
    <property type="entry name" value="Galactose-binding domain-like"/>
    <property type="match status" value="1"/>
</dbReference>
<dbReference type="SUPFAM" id="SSF49863">
    <property type="entry name" value="Hyaluronate lyase-like, C-terminal domain"/>
    <property type="match status" value="1"/>
</dbReference>
<proteinExistence type="evidence at protein level"/>
<sequence>MPIFRFTALAMTLGLLSAPYNAMAATSNPAFDPKNLMQSEIYHFAQNNPLADFSSDKNSILTLSDKRSIMGNQSLLWKWKGGSSFTLHKKLIVPTDKEASKAWGRSSTPVFSFWLYNEKPIDGYLTIDFGEKLISTSEAQAGFKVKLDFTGWRAVGVSLNNDLENREMTLNATNTSSDGTQDSIGRSLGAKVDSIRFKAPSNVSQGEIYIDRIMFSVDDARYQWSDYQVKTRLSEPEIQFHNVKPQLPVTPENLAAIDLIRQRLINEFVGGEKETNLALEENISKLKSDFDALNIHTLANGGTQGRHLITDKQIIIYQPENLNSQDKQLFDNYVILGNYTTLMFNISRAYVLEKDPTQKAQLKQMYLLMTKHLLDQGFVKGSALVTTHHWGYSSRWWYISTLLMSDALKEANLQTQVYDSLLWYSREFKSSFDMKVSADSSDLDYFNTLSRQHLALLLLEPDDQKRINLVNTFSHYITGALTQVPPGGKDGLRPDGTAWRHEGNYPGYSFPAFKNASQLIYLLRDTPFSVGESGWNNLKKAMVSAWIYSNPEVGLPLAGRHPFNSPSLKSVAQGYYWLAMSAKSSPDKTLASIYLAISDKTQNESTAIFGETITPASLPQGFYAFNGGAFGIHRWQDKMVTLKAYNTNVWSSEIYNKDNRYGRYQSHGVAQIVSNGSQLSQGYQQEGWDWNRMQGATTIHLPLKDLDSPKPHTLMQRGERGFSGTSSLEGQYGMMAFDLIYPANLERFDPNFTAKKSVLAADNHLIFIGSNINSSDKNKNVETTLFQHAITPTLNTLWINGQKIENMPYQTTLQQGDWLIDSNGNGYLITQAEKVNVSRQHQVSAENKNRQPTEGNFSSAWIDHSTRPKDASYEYMVFLDATPEKMGEMAQKFRENNGLYQVLRKDKDVHIILDKLSNVTGYAFYQPASIEDKWIKKVNKPAIVMTHRQKDTLIVSAVTPDLNMTRQKAATPVTINVTINGKWQSADKNSEVKYQVSGDNTELTFTSYFGIPQEIKLSPLP</sequence>
<organism>
    <name type="scientific">Proteus vulgaris</name>
    <dbReference type="NCBI Taxonomy" id="585"/>
    <lineage>
        <taxon>Bacteria</taxon>
        <taxon>Pseudomonadati</taxon>
        <taxon>Pseudomonadota</taxon>
        <taxon>Gammaproteobacteria</taxon>
        <taxon>Enterobacterales</taxon>
        <taxon>Morganellaceae</taxon>
        <taxon>Proteus</taxon>
    </lineage>
</organism>